<keyword id="KW-0009">Actin-binding</keyword>
<keyword id="KW-0067">ATP-binding</keyword>
<keyword id="KW-0112">Calmodulin-binding</keyword>
<keyword id="KW-0175">Coiled coil</keyword>
<keyword id="KW-0963">Cytoplasm</keyword>
<keyword id="KW-1009">Hearing</keyword>
<keyword id="KW-0488">Methylation</keyword>
<keyword id="KW-0505">Motor protein</keyword>
<keyword id="KW-0514">Muscle protein</keyword>
<keyword id="KW-0518">Myosin</keyword>
<keyword id="KW-0547">Nucleotide-binding</keyword>
<keyword id="KW-0597">Phosphoprotein</keyword>
<keyword id="KW-1185">Reference proteome</keyword>
<keyword id="KW-0787">Thick filament</keyword>
<feature type="chain" id="PRO_0000274162" description="Myosin-1">
    <location>
        <begin position="1"/>
        <end position="1939"/>
    </location>
</feature>
<feature type="domain" description="Myosin N-terminal SH3-like" evidence="9">
    <location>
        <begin position="33"/>
        <end position="82"/>
    </location>
</feature>
<feature type="domain" description="Myosin motor" evidence="8">
    <location>
        <begin position="86"/>
        <end position="782"/>
    </location>
</feature>
<feature type="domain" description="IQ" evidence="7">
    <location>
        <begin position="785"/>
        <end position="814"/>
    </location>
</feature>
<feature type="region of interest" description="Actin-binding" evidence="1">
    <location>
        <begin position="659"/>
        <end position="681"/>
    </location>
</feature>
<feature type="region of interest" description="Actin-binding" evidence="1">
    <location>
        <begin position="761"/>
        <end position="775"/>
    </location>
</feature>
<feature type="region of interest" description="Disordered" evidence="10">
    <location>
        <begin position="1125"/>
        <end position="1147"/>
    </location>
</feature>
<feature type="region of interest" description="Disordered" evidence="10">
    <location>
        <begin position="1153"/>
        <end position="1172"/>
    </location>
</feature>
<feature type="coiled-coil region" evidence="6">
    <location>
        <begin position="843"/>
        <end position="1939"/>
    </location>
</feature>
<feature type="compositionally biased region" description="Basic and acidic residues" evidence="10">
    <location>
        <begin position="1128"/>
        <end position="1147"/>
    </location>
</feature>
<feature type="binding site" evidence="6">
    <location>
        <begin position="179"/>
        <end position="186"/>
    </location>
    <ligand>
        <name>ATP</name>
        <dbReference type="ChEBI" id="CHEBI:30616"/>
    </ligand>
</feature>
<feature type="modified residue" description="Phosphothreonine" evidence="4">
    <location>
        <position position="64"/>
    </location>
</feature>
<feature type="modified residue" description="Phosphothreonine" evidence="4">
    <location>
        <position position="69"/>
    </location>
</feature>
<feature type="modified residue" description="N6,N6,N6-trimethyllysine" evidence="6">
    <location>
        <position position="130"/>
    </location>
</feature>
<feature type="modified residue" description="Phosphotyrosine" evidence="4">
    <location>
        <position position="389"/>
    </location>
</feature>
<feature type="modified residue" description="Phosphoserine" evidence="4">
    <location>
        <position position="392"/>
    </location>
</feature>
<feature type="modified residue" description="Phosphothreonine" evidence="4">
    <location>
        <position position="419"/>
    </location>
</feature>
<feature type="modified residue" description="Phosphotyrosine" evidence="4">
    <location>
        <position position="424"/>
    </location>
</feature>
<feature type="modified residue" description="Phosphoserine" evidence="4">
    <location>
        <position position="625"/>
    </location>
</feature>
<feature type="modified residue" description="Pros-methylhistidine" evidence="3">
    <location>
        <position position="757"/>
    </location>
</feature>
<feature type="modified residue" description="Phosphoserine" evidence="4">
    <location>
        <position position="1092"/>
    </location>
</feature>
<feature type="modified residue" description="Phosphoserine" evidence="4">
    <location>
        <position position="1096"/>
    </location>
</feature>
<feature type="modified residue" description="Phosphoserine" evidence="4">
    <location>
        <position position="1162"/>
    </location>
</feature>
<feature type="modified residue" description="Phosphoserine" evidence="4">
    <location>
        <position position="1237"/>
    </location>
</feature>
<feature type="modified residue" description="Phosphothreonine" evidence="4">
    <location>
        <position position="1241"/>
    </location>
</feature>
<feature type="modified residue" description="Phosphoserine" evidence="4">
    <location>
        <position position="1243"/>
    </location>
</feature>
<feature type="modified residue" description="Phosphothreonine" evidence="4">
    <location>
        <position position="1255"/>
    </location>
</feature>
<feature type="modified residue" description="Phosphoserine" evidence="4">
    <location>
        <position position="1261"/>
    </location>
</feature>
<feature type="modified residue" description="Phosphothreonine" evidence="4">
    <location>
        <position position="1265"/>
    </location>
</feature>
<feature type="modified residue" description="Phosphothreonine" evidence="4">
    <location>
        <position position="1286"/>
    </location>
</feature>
<feature type="modified residue" description="Phosphoserine" evidence="4">
    <location>
        <position position="1288"/>
    </location>
</feature>
<feature type="modified residue" description="Phosphoserine" evidence="4">
    <location>
        <position position="1292"/>
    </location>
</feature>
<feature type="modified residue" description="Phosphoserine" evidence="4">
    <location>
        <position position="1303"/>
    </location>
</feature>
<feature type="modified residue" description="Phosphoserine" evidence="4">
    <location>
        <position position="1306"/>
    </location>
</feature>
<feature type="modified residue" description="Phosphotyrosine" evidence="4">
    <location>
        <position position="1464"/>
    </location>
</feature>
<feature type="modified residue" description="Phosphothreonine" evidence="4">
    <location>
        <position position="1467"/>
    </location>
</feature>
<feature type="modified residue" description="Phosphoserine" evidence="4">
    <location>
        <position position="1474"/>
    </location>
</feature>
<feature type="modified residue" description="Phosphotyrosine" evidence="4">
    <location>
        <position position="1492"/>
    </location>
</feature>
<feature type="modified residue" description="Phosphoserine" evidence="4">
    <location>
        <position position="1495"/>
    </location>
</feature>
<feature type="modified residue" description="Phosphothreonine" evidence="4">
    <location>
        <position position="1501"/>
    </location>
</feature>
<feature type="modified residue" description="Phosphoserine" evidence="4">
    <location>
        <position position="1514"/>
    </location>
</feature>
<feature type="modified residue" description="Phosphothreonine" evidence="4">
    <location>
        <position position="1517"/>
    </location>
</feature>
<feature type="modified residue" description="Phosphoserine" evidence="4">
    <location>
        <position position="1554"/>
    </location>
</feature>
<feature type="modified residue" description="Phosphoserine" evidence="4">
    <location>
        <position position="1574"/>
    </location>
</feature>
<feature type="modified residue" description="Phosphoserine" evidence="4">
    <location>
        <position position="1600"/>
    </location>
</feature>
<feature type="modified residue" description="Phosphoserine" evidence="4">
    <location>
        <position position="1603"/>
    </location>
</feature>
<feature type="modified residue" description="Phosphoserine" evidence="4">
    <location>
        <position position="1714"/>
    </location>
</feature>
<feature type="modified residue" description="Phosphoserine" evidence="4">
    <location>
        <position position="1726"/>
    </location>
</feature>
<feature type="modified residue" description="Phosphothreonine" evidence="4">
    <location>
        <position position="1730"/>
    </location>
</feature>
<feature type="modified residue" description="Phosphothreonine" evidence="4">
    <location>
        <position position="1736"/>
    </location>
</feature>
<feature type="modified residue" description="Phosphoserine" evidence="4">
    <location>
        <position position="1739"/>
    </location>
</feature>
<dbReference type="EMBL" id="DQ227281">
    <property type="protein sequence ID" value="ABB96408.1"/>
    <property type="status" value="ALT_SEQ"/>
    <property type="molecule type" value="Genomic_DNA"/>
</dbReference>
<dbReference type="RefSeq" id="NP_001107189.1">
    <property type="nucleotide sequence ID" value="NM_001113717.1"/>
</dbReference>
<dbReference type="RefSeq" id="XP_005619524.1">
    <property type="nucleotide sequence ID" value="XM_005619467.2"/>
</dbReference>
<dbReference type="SMR" id="Q076A6"/>
<dbReference type="FunCoup" id="Q076A6">
    <property type="interactions" value="23"/>
</dbReference>
<dbReference type="STRING" id="9615.ENSCAFP00000025847"/>
<dbReference type="PaxDb" id="9612-ENSCAFP00000025847"/>
<dbReference type="GeneID" id="100135061"/>
<dbReference type="KEGG" id="cfa:100135061"/>
<dbReference type="CTD" id="4619"/>
<dbReference type="eggNOG" id="KOG0161">
    <property type="taxonomic scope" value="Eukaryota"/>
</dbReference>
<dbReference type="InParanoid" id="Q076A6"/>
<dbReference type="OrthoDB" id="312459at2759"/>
<dbReference type="TreeFam" id="TF314375"/>
<dbReference type="Proteomes" id="UP000002254">
    <property type="component" value="Unplaced"/>
</dbReference>
<dbReference type="Proteomes" id="UP000694429">
    <property type="component" value="Unplaced"/>
</dbReference>
<dbReference type="Proteomes" id="UP000694542">
    <property type="component" value="Unplaced"/>
</dbReference>
<dbReference type="Proteomes" id="UP000805418">
    <property type="component" value="Unplaced"/>
</dbReference>
<dbReference type="GO" id="GO:0005737">
    <property type="term" value="C:cytoplasm"/>
    <property type="evidence" value="ECO:0000318"/>
    <property type="project" value="GO_Central"/>
</dbReference>
<dbReference type="GO" id="GO:0030016">
    <property type="term" value="C:myofibril"/>
    <property type="evidence" value="ECO:0007669"/>
    <property type="project" value="UniProtKB-SubCell"/>
</dbReference>
<dbReference type="GO" id="GO:0032982">
    <property type="term" value="C:myosin filament"/>
    <property type="evidence" value="ECO:0000318"/>
    <property type="project" value="GO_Central"/>
</dbReference>
<dbReference type="GO" id="GO:0016460">
    <property type="term" value="C:myosin II complex"/>
    <property type="evidence" value="ECO:0000318"/>
    <property type="project" value="GO_Central"/>
</dbReference>
<dbReference type="GO" id="GO:0051015">
    <property type="term" value="F:actin filament binding"/>
    <property type="evidence" value="ECO:0000318"/>
    <property type="project" value="GO_Central"/>
</dbReference>
<dbReference type="GO" id="GO:0005524">
    <property type="term" value="F:ATP binding"/>
    <property type="evidence" value="ECO:0007669"/>
    <property type="project" value="UniProtKB-KW"/>
</dbReference>
<dbReference type="GO" id="GO:0005516">
    <property type="term" value="F:calmodulin binding"/>
    <property type="evidence" value="ECO:0007669"/>
    <property type="project" value="UniProtKB-KW"/>
</dbReference>
<dbReference type="GO" id="GO:0000146">
    <property type="term" value="F:microfilament motor activity"/>
    <property type="evidence" value="ECO:0000318"/>
    <property type="project" value="GO_Central"/>
</dbReference>
<dbReference type="GO" id="GO:0006936">
    <property type="term" value="P:muscle contraction"/>
    <property type="evidence" value="ECO:0000318"/>
    <property type="project" value="GO_Central"/>
</dbReference>
<dbReference type="CDD" id="cd14910">
    <property type="entry name" value="MYSc_Myh1_mammals"/>
    <property type="match status" value="1"/>
</dbReference>
<dbReference type="FunFam" id="1.10.10.820:FF:000001">
    <property type="entry name" value="Myosin heavy chain"/>
    <property type="match status" value="1"/>
</dbReference>
<dbReference type="FunFam" id="1.20.5.340:FF:000002">
    <property type="entry name" value="Myosin heavy chain"/>
    <property type="match status" value="1"/>
</dbReference>
<dbReference type="FunFam" id="1.20.5.340:FF:000003">
    <property type="entry name" value="Myosin heavy chain"/>
    <property type="match status" value="1"/>
</dbReference>
<dbReference type="FunFam" id="1.20.5.340:FF:000004">
    <property type="entry name" value="Myosin heavy chain"/>
    <property type="match status" value="1"/>
</dbReference>
<dbReference type="FunFam" id="1.20.5.340:FF:000006">
    <property type="entry name" value="Myosin heavy chain"/>
    <property type="match status" value="1"/>
</dbReference>
<dbReference type="FunFam" id="1.20.5.340:FF:000013">
    <property type="entry name" value="Myosin heavy chain"/>
    <property type="match status" value="1"/>
</dbReference>
<dbReference type="FunFam" id="1.20.5.370:FF:000001">
    <property type="entry name" value="Myosin heavy chain"/>
    <property type="match status" value="1"/>
</dbReference>
<dbReference type="FunFam" id="1.20.5.370:FF:000002">
    <property type="entry name" value="Myosin heavy chain"/>
    <property type="match status" value="1"/>
</dbReference>
<dbReference type="FunFam" id="1.20.5.370:FF:000003">
    <property type="entry name" value="Myosin heavy chain"/>
    <property type="match status" value="1"/>
</dbReference>
<dbReference type="FunFam" id="1.20.5.370:FF:000007">
    <property type="entry name" value="Myosin heavy chain"/>
    <property type="match status" value="1"/>
</dbReference>
<dbReference type="FunFam" id="1.20.5.370:FF:000008">
    <property type="entry name" value="Myosin heavy chain"/>
    <property type="match status" value="1"/>
</dbReference>
<dbReference type="FunFam" id="1.20.5.4820:FF:000001">
    <property type="entry name" value="Myosin heavy chain"/>
    <property type="match status" value="1"/>
</dbReference>
<dbReference type="FunFam" id="1.20.58.530:FF:000001">
    <property type="entry name" value="Myosin heavy chain"/>
    <property type="match status" value="1"/>
</dbReference>
<dbReference type="FunFam" id="2.30.30.360:FF:000001">
    <property type="entry name" value="Myosin heavy chain"/>
    <property type="match status" value="1"/>
</dbReference>
<dbReference type="FunFam" id="3.40.850.10:FF:000024">
    <property type="entry name" value="Myosin heavy chain, isoform J"/>
    <property type="match status" value="1"/>
</dbReference>
<dbReference type="FunFam" id="1.20.120.720:FF:000001">
    <property type="entry name" value="Myosin heavy chain, muscle"/>
    <property type="match status" value="1"/>
</dbReference>
<dbReference type="Gene3D" id="1.10.10.820">
    <property type="match status" value="1"/>
</dbReference>
<dbReference type="Gene3D" id="1.20.5.340">
    <property type="match status" value="5"/>
</dbReference>
<dbReference type="Gene3D" id="1.20.5.370">
    <property type="match status" value="4"/>
</dbReference>
<dbReference type="Gene3D" id="1.20.5.4820">
    <property type="match status" value="1"/>
</dbReference>
<dbReference type="Gene3D" id="1.20.58.530">
    <property type="match status" value="1"/>
</dbReference>
<dbReference type="Gene3D" id="6.10.250.2420">
    <property type="match status" value="1"/>
</dbReference>
<dbReference type="Gene3D" id="3.40.850.10">
    <property type="entry name" value="Kinesin motor domain"/>
    <property type="match status" value="1"/>
</dbReference>
<dbReference type="Gene3D" id="2.30.30.360">
    <property type="entry name" value="Myosin S1 fragment, N-terminal"/>
    <property type="match status" value="1"/>
</dbReference>
<dbReference type="Gene3D" id="1.20.120.720">
    <property type="entry name" value="Myosin VI head, motor domain, U50 subdomain"/>
    <property type="match status" value="1"/>
</dbReference>
<dbReference type="InterPro" id="IPR000048">
    <property type="entry name" value="IQ_motif_EF-hand-BS"/>
</dbReference>
<dbReference type="InterPro" id="IPR036961">
    <property type="entry name" value="Kinesin_motor_dom_sf"/>
</dbReference>
<dbReference type="InterPro" id="IPR001609">
    <property type="entry name" value="Myosin_head_motor_dom-like"/>
</dbReference>
<dbReference type="InterPro" id="IPR004009">
    <property type="entry name" value="Myosin_N"/>
</dbReference>
<dbReference type="InterPro" id="IPR008989">
    <property type="entry name" value="Myosin_S1_N"/>
</dbReference>
<dbReference type="InterPro" id="IPR002928">
    <property type="entry name" value="Myosin_tail"/>
</dbReference>
<dbReference type="InterPro" id="IPR027417">
    <property type="entry name" value="P-loop_NTPase"/>
</dbReference>
<dbReference type="InterPro" id="IPR014751">
    <property type="entry name" value="XRCC4-like_C"/>
</dbReference>
<dbReference type="PANTHER" id="PTHR45615">
    <property type="entry name" value="MYOSIN HEAVY CHAIN, NON-MUSCLE"/>
    <property type="match status" value="1"/>
</dbReference>
<dbReference type="PANTHER" id="PTHR45615:SF2">
    <property type="entry name" value="MYOSIN-1"/>
    <property type="match status" value="1"/>
</dbReference>
<dbReference type="Pfam" id="PF00063">
    <property type="entry name" value="Myosin_head"/>
    <property type="match status" value="1"/>
</dbReference>
<dbReference type="Pfam" id="PF02736">
    <property type="entry name" value="Myosin_N"/>
    <property type="match status" value="1"/>
</dbReference>
<dbReference type="Pfam" id="PF01576">
    <property type="entry name" value="Myosin_tail_1"/>
    <property type="match status" value="1"/>
</dbReference>
<dbReference type="PRINTS" id="PR00193">
    <property type="entry name" value="MYOSINHEAVY"/>
</dbReference>
<dbReference type="SMART" id="SM00015">
    <property type="entry name" value="IQ"/>
    <property type="match status" value="2"/>
</dbReference>
<dbReference type="SMART" id="SM00242">
    <property type="entry name" value="MYSc"/>
    <property type="match status" value="1"/>
</dbReference>
<dbReference type="SUPFAM" id="SSF90257">
    <property type="entry name" value="Myosin rod fragments"/>
    <property type="match status" value="5"/>
</dbReference>
<dbReference type="SUPFAM" id="SSF52540">
    <property type="entry name" value="P-loop containing nucleoside triphosphate hydrolases"/>
    <property type="match status" value="1"/>
</dbReference>
<dbReference type="PROSITE" id="PS50096">
    <property type="entry name" value="IQ"/>
    <property type="match status" value="1"/>
</dbReference>
<dbReference type="PROSITE" id="PS51456">
    <property type="entry name" value="MYOSIN_MOTOR"/>
    <property type="match status" value="1"/>
</dbReference>
<dbReference type="PROSITE" id="PS51844">
    <property type="entry name" value="SH3_LIKE"/>
    <property type="match status" value="1"/>
</dbReference>
<protein>
    <recommendedName>
        <fullName>Myosin-1</fullName>
    </recommendedName>
    <alternativeName>
        <fullName>Myosin heavy chain 1</fullName>
    </alternativeName>
    <alternativeName>
        <fullName>Myosin heavy chain 2x</fullName>
        <shortName>MyHC-2x</shortName>
    </alternativeName>
    <alternativeName>
        <fullName>Myosin heavy chain, skeletal muscle, adult 1</fullName>
    </alternativeName>
</protein>
<accession>Q076A6</accession>
<reference key="1">
    <citation type="submission" date="2005-09" db="EMBL/GenBank/DDBJ databases">
        <title>Canine myosin heavy chain expression.</title>
        <authorList>
            <person name="Maccatrozzo L."/>
            <person name="Patruno M."/>
            <person name="Mascarello F."/>
            <person name="Reggiani C."/>
        </authorList>
    </citation>
    <scope>NUCLEOTIDE SEQUENCE [GENOMIC DNA]</scope>
</reference>
<proteinExistence type="inferred from homology"/>
<gene>
    <name type="primary">MYH1</name>
</gene>
<name>MYH1_CANLF</name>
<organism>
    <name type="scientific">Canis lupus familiaris</name>
    <name type="common">Dog</name>
    <name type="synonym">Canis familiaris</name>
    <dbReference type="NCBI Taxonomy" id="9615"/>
    <lineage>
        <taxon>Eukaryota</taxon>
        <taxon>Metazoa</taxon>
        <taxon>Chordata</taxon>
        <taxon>Craniata</taxon>
        <taxon>Vertebrata</taxon>
        <taxon>Euteleostomi</taxon>
        <taxon>Mammalia</taxon>
        <taxon>Eutheria</taxon>
        <taxon>Laurasiatheria</taxon>
        <taxon>Carnivora</taxon>
        <taxon>Caniformia</taxon>
        <taxon>Canidae</taxon>
        <taxon>Canis</taxon>
    </lineage>
</organism>
<comment type="function">
    <text evidence="5">Required for normal hearing. It plays a role in cochlear amplification of auditory stimuli, likely through the positive regulation of prestin (SLC26A5) activity and outer hair cell (OHC) electromotility.</text>
</comment>
<comment type="subunit">
    <text evidence="2">Muscle myosin is a hexameric protein that consists of 2 heavy chain subunits (MHC), 2 alkali light chain subunits (MLC) and 2 regulatory light chain subunits (MLC-2). Interacts with SLC26A5.</text>
</comment>
<comment type="subcellular location">
    <subcellularLocation>
        <location evidence="1">Cytoplasm</location>
        <location evidence="1">Myofibril</location>
    </subcellularLocation>
    <text evidence="1">Thick filaments of the myofibrils.</text>
</comment>
<comment type="domain">
    <text>The rodlike tail sequence is highly repetitive, showing cycles of a 28-residue repeat pattern composed of 4 heptapeptides, characteristic for alpha-helical coiled coils.</text>
</comment>
<comment type="domain">
    <text evidence="11">Limited proteolysis of myosin heavy chain produces 1 light meromyosin (LMM) and 1 heavy meromyosin (HMM). HMM can be further cleaved into 2 globular subfragments (S1) and 1 rod-shaped subfragment (S2).</text>
</comment>
<comment type="similarity">
    <text evidence="11">Belongs to the TRAFAC class myosin-kinesin ATPase superfamily. Myosin family.</text>
</comment>
<comment type="caution">
    <text evidence="11">Represents a conventional myosin. This protein should not be confused with the unconventional myosin-1 (MYO1).</text>
</comment>
<comment type="sequence caution" evidence="11">
    <conflict type="erroneous gene model prediction">
        <sequence resource="EMBL-CDS" id="ABB96408"/>
    </conflict>
</comment>
<sequence length="1939" mass="223148">MSSDQEMAIFGEAAPYLRKSEKERIEAQNRPFDAKTSVFVAEPKESFVKGTVQSREGGKVTVKTEAGATLTVKEDQVFPMNPPKYDKIEDMAMMTHLHEPAVLYNLKERYAAWMIYTYSGLFCVTVNPYKWLPVYNAEVVTAYRGKKRQEAPPHIFSISDNAYQFMLTDRENQSILITGESGAGKTVNTKRVIQYFATIAVTGDKKKEEVTSGKIQGTLEDQIISANPLLEAFGNAKTVRNDNSSRFGKFIRIHFGTTGKLASADIETYLLEKSRVTFQLKAERSYHIFYQIMSNKKPDLIEMLLITTNPYDYAFVSQGEITVPSIDDQEELIATDSAIDILGFTSDERVSIYKLTGAVMHYGNMKFKQKQREEQAEPDGTEVADKAAYLQSLNSADLLKALCYPRVKVGNEFVTKGQTVQQVYNAVGALAKAVYEKMFLWMVTRINQQLDTKQPRQYFIGVLDIAGFEIFDFNSLEQLCINFTNEKLQQFFNHHMFVLEQEEYKKEGIEWEFIDFGMDLAACIELIEKPMGIFSILEEECMFPKATDTSFKNKLYEQHLGKSNNFQKPKPAKGKVEAHFSLIHYAGTVDYNIGGWLDKNKDPLNETVVGLYQKSAMKTLANLFSGATAAEAEAGGGKKGGKKKGSSFQTVSALFRENLNKLMTNLRSTHPHFVRCIIPNETKTPGAMEHELVLHQLRCNGVLEGIRICRKGFPSRILYADFKQRYKVLNASAIPEGQFIDSKKASEKLLGSIDVDHTQYKFGHTKVFFKAGLLGLLEEMRDDKLAQLITRTQARCRGFLARVEYQKMVERRESIFCIQYNIRAFMNVKHWPWMKLYFKIKPLLKSAETEKEMANMKEEFEKTKESLAKAEAKRKELEEKMVALMQEKNDLQLQVQAEADSLADAEERCDQLIKTKIQLEAKIKEVTERAEDEEEINAELTAKKRKLEDECSELKKDIDDLELTLAKVEKEKHATENKVKNLTEEMAGLDETIAKLTKEKKALQEAHQQTLDDLQAEEDKVNTLTKAKIKLEQQVDDLEGSLEQEKKIRMDLERAKRKLEGDLKLAQESTMDIENDKQQLDEKLKKKEFEMSNLQSKIEDEQALAMQLQKKIKELQARIEELEEEIEAERASRAKAEKQRSDLSRELEEISERLEEAGGATSAQIEMNKKREAEFQKMRRDLEEATLQHEATAATLRKKHADSVAELGEQIDNLQRVKQKLEKEKSEMKMEIDDLASNMETVSKAKGNLEKMCRTLEDQVSELKTKEEEQQRLINDLTAQRARLQTESGEYSRQLDEKDSLVSQLSRGKLAFTQQIEELKRQLEEEIKAKSALAHALQSARHDCDLLREQYEEEQEGKAELQRAMSKANSEVAQWRTKYETDAIQRTEELEEAKKKLAQRLQDAEEHVEAVNAKCASLEKTKQRLQNEVEDLMIDVERTNAACAALDKKQRNFDKILAEWKQKYEETHAELEASQKESRSLSTELFKIKNAYEESLDQLETLKRENKNLQQEISDLTEQIAEGGKRIHELEKIKKQVEQEKTELQAALEEAEASLEHEEGKILRIQLELNQVKSEIDRKIAEKDEEIDQLKRNHIRVVESMQSTLDAEIRSRNDAIRLKKKMEGDLNEMEIQLNHANRMAAEALRNYRNTQGILKDTQIHLDDALRGQEDLKEQLAMVERRANLLQAEIEELRATLEQTERSRKIAEQELLDASERVQLLHTQNTSLINTKKKLETDISQIQGEMEDIIQEARNAEEKAKKAITDAAMMAEELKKEQDTSAHLERMKKNMEQTVKDLQHRLDEAEQLALKGGKKQIQKLEARVRELEGEVESEQKHNIETVKSLRKHERRVKELTYQTEEDRKNVLRLQDLVDKLQAKVKAYKRQAEEAEEQSNVNLSKFRKLQHELEEAEERADIAESQVNKLRVKSREVHTKIISEE</sequence>
<evidence type="ECO:0000250" key="1"/>
<evidence type="ECO:0000250" key="2">
    <source>
        <dbReference type="UniProtKB" id="P12882"/>
    </source>
</evidence>
<evidence type="ECO:0000250" key="3">
    <source>
        <dbReference type="UniProtKB" id="Q28641"/>
    </source>
</evidence>
<evidence type="ECO:0000250" key="4">
    <source>
        <dbReference type="UniProtKB" id="Q29RW1"/>
    </source>
</evidence>
<evidence type="ECO:0000250" key="5">
    <source>
        <dbReference type="UniProtKB" id="Q5SX40"/>
    </source>
</evidence>
<evidence type="ECO:0000255" key="6"/>
<evidence type="ECO:0000255" key="7">
    <source>
        <dbReference type="PROSITE-ProRule" id="PRU00116"/>
    </source>
</evidence>
<evidence type="ECO:0000255" key="8">
    <source>
        <dbReference type="PROSITE-ProRule" id="PRU00782"/>
    </source>
</evidence>
<evidence type="ECO:0000255" key="9">
    <source>
        <dbReference type="PROSITE-ProRule" id="PRU01190"/>
    </source>
</evidence>
<evidence type="ECO:0000256" key="10">
    <source>
        <dbReference type="SAM" id="MobiDB-lite"/>
    </source>
</evidence>
<evidence type="ECO:0000305" key="11"/>